<keyword id="KW-0021">Allosteric enzyme</keyword>
<keyword id="KW-0067">ATP-binding</keyword>
<keyword id="KW-0119">Carbohydrate metabolism</keyword>
<keyword id="KW-0320">Glycogen biosynthesis</keyword>
<keyword id="KW-0321">Glycogen metabolism</keyword>
<keyword id="KW-0547">Nucleotide-binding</keyword>
<keyword id="KW-0548">Nucleotidyltransferase</keyword>
<keyword id="KW-1185">Reference proteome</keyword>
<keyword id="KW-0808">Transferase</keyword>
<sequence>MVSLEKNDHLMLARQLPLKSVALILAGGRGTRLKDLTNKRAKPAVHFGGKFRIIDFALSNCINSGIRRMGVITQYQSHTLVQHIQRGWSFFNEEMNEFVDLLPAQQRMKGENWYRGTADAVTQNLDIIRRYKAEYVVILAGDHIYKQDYSRMLIDHVEKGARCTVACMPVPIEEASAFGVMAVDENDKIIEFVEKPANPPSMPNDPSKSLASMGIYVFDADYLYELLEEDDRDENSSHDFGKDLIPKITEAGLAYAHPFPLSCVQSDPDAEPYWRDVGTLKAYWKANLDLASVVPELDMYDRNWPIRTYNESLPPAKFVQDRSGSHGMTLNSLVSGGCVISGSVVVQSVLFSRVRVNSFCNIDSAVLLPEVWVGRSCRLRRCVIDRACVIPEGMVIGENAEEDARRFYRSEEGIVLVTREMLRKLGHKQER</sequence>
<protein>
    <recommendedName>
        <fullName evidence="1">Glucose-1-phosphate adenylyltransferase</fullName>
        <ecNumber evidence="1">2.7.7.27</ecNumber>
    </recommendedName>
    <alternativeName>
        <fullName evidence="1">ADP-glucose pyrophosphorylase</fullName>
        <shortName evidence="1">ADPGlc PPase</shortName>
    </alternativeName>
    <alternativeName>
        <fullName evidence="1">ADP-glucose synthase</fullName>
    </alternativeName>
</protein>
<comment type="function">
    <text evidence="1">Involved in the biosynthesis of ADP-glucose, a building block required for the elongation reactions to produce glycogen. Catalyzes the reaction between ATP and alpha-D-glucose 1-phosphate (G1P) to produce pyrophosphate and ADP-Glc.</text>
</comment>
<comment type="catalytic activity">
    <reaction evidence="1">
        <text>alpha-D-glucose 1-phosphate + ATP + H(+) = ADP-alpha-D-glucose + diphosphate</text>
        <dbReference type="Rhea" id="RHEA:12120"/>
        <dbReference type="ChEBI" id="CHEBI:15378"/>
        <dbReference type="ChEBI" id="CHEBI:30616"/>
        <dbReference type="ChEBI" id="CHEBI:33019"/>
        <dbReference type="ChEBI" id="CHEBI:57498"/>
        <dbReference type="ChEBI" id="CHEBI:58601"/>
        <dbReference type="EC" id="2.7.7.27"/>
    </reaction>
</comment>
<comment type="activity regulation">
    <text evidence="1">Allosterically activated by fructose-1,6-bisphosphate (F16BP) and inhibited by AMP.</text>
</comment>
<comment type="pathway">
    <text evidence="1">Glycan biosynthesis; glycogen biosynthesis.</text>
</comment>
<comment type="subunit">
    <text evidence="1">Homotetramer.</text>
</comment>
<comment type="similarity">
    <text evidence="1">Belongs to the bacterial/plant glucose-1-phosphate adenylyltransferase family.</text>
</comment>
<organism>
    <name type="scientific">Shigella boydii serotype 18 (strain CDC 3083-94 / BS512)</name>
    <dbReference type="NCBI Taxonomy" id="344609"/>
    <lineage>
        <taxon>Bacteria</taxon>
        <taxon>Pseudomonadati</taxon>
        <taxon>Pseudomonadota</taxon>
        <taxon>Gammaproteobacteria</taxon>
        <taxon>Enterobacterales</taxon>
        <taxon>Enterobacteriaceae</taxon>
        <taxon>Shigella</taxon>
    </lineage>
</organism>
<accession>B2U4G2</accession>
<gene>
    <name evidence="1" type="primary">glgC</name>
    <name type="ordered locus">SbBS512_E3894</name>
</gene>
<feature type="chain" id="PRO_1000130504" description="Glucose-1-phosphate adenylyltransferase">
    <location>
        <begin position="1"/>
        <end position="431"/>
    </location>
</feature>
<feature type="binding site" evidence="1">
    <location>
        <position position="39"/>
    </location>
    <ligand>
        <name>beta-D-fructose 1,6-bisphosphate</name>
        <dbReference type="ChEBI" id="CHEBI:32966"/>
    </ligand>
</feature>
<feature type="binding site" evidence="1">
    <location>
        <position position="40"/>
    </location>
    <ligand>
        <name>AMP</name>
        <dbReference type="ChEBI" id="CHEBI:456215"/>
    </ligand>
</feature>
<feature type="binding site" evidence="1">
    <location>
        <position position="46"/>
    </location>
    <ligand>
        <name>AMP</name>
        <dbReference type="ChEBI" id="CHEBI:456215"/>
    </ligand>
</feature>
<feature type="binding site" evidence="1">
    <location>
        <position position="52"/>
    </location>
    <ligand>
        <name>AMP</name>
        <dbReference type="ChEBI" id="CHEBI:456215"/>
    </ligand>
</feature>
<feature type="binding site" evidence="1">
    <location>
        <position position="114"/>
    </location>
    <ligand>
        <name>alpha-D-glucose 1-phosphate</name>
        <dbReference type="ChEBI" id="CHEBI:58601"/>
    </ligand>
</feature>
<feature type="binding site" evidence="1">
    <location>
        <position position="130"/>
    </location>
    <ligand>
        <name>AMP</name>
        <dbReference type="ChEBI" id="CHEBI:456215"/>
    </ligand>
</feature>
<feature type="binding site" evidence="1">
    <location>
        <position position="179"/>
    </location>
    <ligand>
        <name>alpha-D-glucose 1-phosphate</name>
        <dbReference type="ChEBI" id="CHEBI:58601"/>
    </ligand>
</feature>
<feature type="binding site" evidence="1">
    <location>
        <begin position="194"/>
        <end position="195"/>
    </location>
    <ligand>
        <name>alpha-D-glucose 1-phosphate</name>
        <dbReference type="ChEBI" id="CHEBI:58601"/>
    </ligand>
</feature>
<feature type="binding site" evidence="1">
    <location>
        <position position="212"/>
    </location>
    <ligand>
        <name>alpha-D-glucose 1-phosphate</name>
        <dbReference type="ChEBI" id="CHEBI:58601"/>
    </ligand>
</feature>
<feature type="binding site" evidence="1">
    <location>
        <position position="370"/>
    </location>
    <ligand>
        <name>AMP</name>
        <dbReference type="ChEBI" id="CHEBI:456215"/>
    </ligand>
</feature>
<feature type="binding site" evidence="1">
    <location>
        <position position="386"/>
    </location>
    <ligand>
        <name>AMP</name>
        <dbReference type="ChEBI" id="CHEBI:456215"/>
    </ligand>
</feature>
<feature type="binding site" evidence="1">
    <location>
        <begin position="419"/>
        <end position="423"/>
    </location>
    <ligand>
        <name>beta-D-fructose 1,6-bisphosphate</name>
        <dbReference type="ChEBI" id="CHEBI:32966"/>
    </ligand>
</feature>
<feature type="binding site" evidence="1">
    <location>
        <begin position="429"/>
        <end position="431"/>
    </location>
    <ligand>
        <name>beta-D-fructose 1,6-bisphosphate</name>
        <dbReference type="ChEBI" id="CHEBI:32966"/>
    </ligand>
</feature>
<feature type="site" description="Could play a key role in the communication between the regulatory and the substrate sites" evidence="1">
    <location>
        <position position="74"/>
    </location>
</feature>
<feature type="site" description="Could play a key role in the communication between the regulatory and the substrate sites" evidence="1">
    <location>
        <position position="113"/>
    </location>
</feature>
<evidence type="ECO:0000255" key="1">
    <source>
        <dbReference type="HAMAP-Rule" id="MF_00624"/>
    </source>
</evidence>
<dbReference type="EC" id="2.7.7.27" evidence="1"/>
<dbReference type="EMBL" id="CP001063">
    <property type="protein sequence ID" value="ACD06539.1"/>
    <property type="molecule type" value="Genomic_DNA"/>
</dbReference>
<dbReference type="RefSeq" id="WP_000253979.1">
    <property type="nucleotide sequence ID" value="NC_010658.1"/>
</dbReference>
<dbReference type="SMR" id="B2U4G2"/>
<dbReference type="STRING" id="344609.SbBS512_E3894"/>
<dbReference type="KEGG" id="sbc:SbBS512_E3894"/>
<dbReference type="HOGENOM" id="CLU_029499_14_1_6"/>
<dbReference type="UniPathway" id="UPA00164"/>
<dbReference type="Proteomes" id="UP000001030">
    <property type="component" value="Chromosome"/>
</dbReference>
<dbReference type="GO" id="GO:0005524">
    <property type="term" value="F:ATP binding"/>
    <property type="evidence" value="ECO:0007669"/>
    <property type="project" value="UniProtKB-KW"/>
</dbReference>
<dbReference type="GO" id="GO:0008878">
    <property type="term" value="F:glucose-1-phosphate adenylyltransferase activity"/>
    <property type="evidence" value="ECO:0007669"/>
    <property type="project" value="UniProtKB-UniRule"/>
</dbReference>
<dbReference type="GO" id="GO:0005978">
    <property type="term" value="P:glycogen biosynthetic process"/>
    <property type="evidence" value="ECO:0007669"/>
    <property type="project" value="UniProtKB-UniRule"/>
</dbReference>
<dbReference type="CDD" id="cd02508">
    <property type="entry name" value="ADP_Glucose_PP"/>
    <property type="match status" value="1"/>
</dbReference>
<dbReference type="CDD" id="cd04651">
    <property type="entry name" value="LbH_G1P_AT_C"/>
    <property type="match status" value="1"/>
</dbReference>
<dbReference type="FunFam" id="2.160.10.10:FF:000006">
    <property type="entry name" value="Glucose-1-phosphate adenylyltransferase"/>
    <property type="match status" value="1"/>
</dbReference>
<dbReference type="FunFam" id="3.90.550.10:FF:000014">
    <property type="entry name" value="Glucose-1-phosphate adenylyltransferase"/>
    <property type="match status" value="1"/>
</dbReference>
<dbReference type="Gene3D" id="2.160.10.10">
    <property type="entry name" value="Hexapeptide repeat proteins"/>
    <property type="match status" value="1"/>
</dbReference>
<dbReference type="Gene3D" id="3.90.550.10">
    <property type="entry name" value="Spore Coat Polysaccharide Biosynthesis Protein SpsA, Chain A"/>
    <property type="match status" value="1"/>
</dbReference>
<dbReference type="HAMAP" id="MF_00624">
    <property type="entry name" value="GlgC"/>
    <property type="match status" value="1"/>
</dbReference>
<dbReference type="InterPro" id="IPR011831">
    <property type="entry name" value="ADP-Glc_PPase"/>
</dbReference>
<dbReference type="InterPro" id="IPR005836">
    <property type="entry name" value="ADP_Glu_pyroP_CS"/>
</dbReference>
<dbReference type="InterPro" id="IPR023049">
    <property type="entry name" value="GlgC_bac"/>
</dbReference>
<dbReference type="InterPro" id="IPR056818">
    <property type="entry name" value="GlmU/GlgC-like_hexapep"/>
</dbReference>
<dbReference type="InterPro" id="IPR005835">
    <property type="entry name" value="NTP_transferase_dom"/>
</dbReference>
<dbReference type="InterPro" id="IPR029044">
    <property type="entry name" value="Nucleotide-diphossugar_trans"/>
</dbReference>
<dbReference type="InterPro" id="IPR011004">
    <property type="entry name" value="Trimer_LpxA-like_sf"/>
</dbReference>
<dbReference type="NCBIfam" id="TIGR02091">
    <property type="entry name" value="glgC"/>
    <property type="match status" value="1"/>
</dbReference>
<dbReference type="NCBIfam" id="NF001947">
    <property type="entry name" value="PRK00725.1"/>
    <property type="match status" value="1"/>
</dbReference>
<dbReference type="NCBIfam" id="NF002023">
    <property type="entry name" value="PRK00844.1"/>
    <property type="match status" value="1"/>
</dbReference>
<dbReference type="PANTHER" id="PTHR43523:SF2">
    <property type="entry name" value="GLUCOSE-1-PHOSPHATE ADENYLYLTRANSFERASE"/>
    <property type="match status" value="1"/>
</dbReference>
<dbReference type="PANTHER" id="PTHR43523">
    <property type="entry name" value="GLUCOSE-1-PHOSPHATE ADENYLYLTRANSFERASE-RELATED"/>
    <property type="match status" value="1"/>
</dbReference>
<dbReference type="Pfam" id="PF24894">
    <property type="entry name" value="Hexapep_GlmU"/>
    <property type="match status" value="1"/>
</dbReference>
<dbReference type="Pfam" id="PF00483">
    <property type="entry name" value="NTP_transferase"/>
    <property type="match status" value="1"/>
</dbReference>
<dbReference type="SUPFAM" id="SSF53448">
    <property type="entry name" value="Nucleotide-diphospho-sugar transferases"/>
    <property type="match status" value="1"/>
</dbReference>
<dbReference type="SUPFAM" id="SSF51161">
    <property type="entry name" value="Trimeric LpxA-like enzymes"/>
    <property type="match status" value="1"/>
</dbReference>
<dbReference type="PROSITE" id="PS00808">
    <property type="entry name" value="ADP_GLC_PYROPHOSPH_1"/>
    <property type="match status" value="1"/>
</dbReference>
<dbReference type="PROSITE" id="PS00809">
    <property type="entry name" value="ADP_GLC_PYROPHOSPH_2"/>
    <property type="match status" value="1"/>
</dbReference>
<dbReference type="PROSITE" id="PS00810">
    <property type="entry name" value="ADP_GLC_PYROPHOSPH_3"/>
    <property type="match status" value="1"/>
</dbReference>
<reference key="1">
    <citation type="submission" date="2008-05" db="EMBL/GenBank/DDBJ databases">
        <title>Complete sequence of Shigella boydii serotype 18 strain BS512.</title>
        <authorList>
            <person name="Rasko D.A."/>
            <person name="Rosovitz M."/>
            <person name="Maurelli A.T."/>
            <person name="Myers G."/>
            <person name="Seshadri R."/>
            <person name="Cer R."/>
            <person name="Jiang L."/>
            <person name="Ravel J."/>
            <person name="Sebastian Y."/>
        </authorList>
    </citation>
    <scope>NUCLEOTIDE SEQUENCE [LARGE SCALE GENOMIC DNA]</scope>
    <source>
        <strain>CDC 3083-94 / BS512</strain>
    </source>
</reference>
<proteinExistence type="inferred from homology"/>
<name>GLGC_SHIB3</name>